<protein>
    <recommendedName>
        <fullName>UPF0053 protein BUsg_314</fullName>
    </recommendedName>
</protein>
<accession>Q8K9M0</accession>
<reference key="1">
    <citation type="journal article" date="2002" name="Science">
        <title>50 million years of genomic stasis in endosymbiotic bacteria.</title>
        <authorList>
            <person name="Tamas I."/>
            <person name="Klasson L."/>
            <person name="Canbaeck B."/>
            <person name="Naeslund A.K."/>
            <person name="Eriksson A.-S."/>
            <person name="Wernegreen J.J."/>
            <person name="Sandstroem J.P."/>
            <person name="Moran N.A."/>
            <person name="Andersson S.G.E."/>
        </authorList>
    </citation>
    <scope>NUCLEOTIDE SEQUENCE [LARGE SCALE GENOMIC DNA]</scope>
    <source>
        <strain>Sg</strain>
    </source>
</reference>
<gene>
    <name type="ordered locus">BUsg_314</name>
</gene>
<name>Y314_BUCAP</name>
<sequence>MEFFLDPSIWAGLLTLVVLEVVLGIDNLIFVAILSEKLPPNQRDKARLIGLGLALIMRLALLSLISWVVTLTSPIISNNFFSLSIRDLILLIGGLFLLFKATIELHERLENEDHENTENKNYASFWAVVIQIVVLDAVFSLDAIITAVGMVNQLLIMMIAVVLATILMLLASKALTNFINIHQTVVVLCLSFLLMIGFSLVAEALKFYIPKGYLYAAIGFSILIEIFNQIARHNFMKNQSRKPMRQRAAEAILRLMIREKNNNKNRIKTDNKAEIVLSSSLETETFKDEEKYMINGVLTLAGRSIKSIMTPRSNISWVNTEKTINEIRLQLLDTPHNLFPVCKGELDEIIGIVRAKELLVAIEKNIDVYTFASQIPPIIIPDTLDPINLLGVLRRAQGSFVIVSNEFGVVQGLITPLDVLEAIAGEFPDADETPDIIKEQNSWLVKGETDLHSLQQLLNTKELIKQDDCASLGGLLISQKGQLPLPGETIKINSFSFHIVNATEYRIDLVRITKN</sequence>
<proteinExistence type="inferred from homology"/>
<organism>
    <name type="scientific">Buchnera aphidicola subsp. Schizaphis graminum (strain Sg)</name>
    <dbReference type="NCBI Taxonomy" id="198804"/>
    <lineage>
        <taxon>Bacteria</taxon>
        <taxon>Pseudomonadati</taxon>
        <taxon>Pseudomonadota</taxon>
        <taxon>Gammaproteobacteria</taxon>
        <taxon>Enterobacterales</taxon>
        <taxon>Erwiniaceae</taxon>
        <taxon>Buchnera</taxon>
    </lineage>
</organism>
<evidence type="ECO:0000255" key="1"/>
<evidence type="ECO:0000255" key="2">
    <source>
        <dbReference type="PROSITE-ProRule" id="PRU00703"/>
    </source>
</evidence>
<evidence type="ECO:0000305" key="3"/>
<feature type="chain" id="PRO_0000088376" description="UPF0053 protein BUsg_314">
    <location>
        <begin position="1"/>
        <end position="515"/>
    </location>
</feature>
<feature type="transmembrane region" description="Helical" evidence="1">
    <location>
        <begin position="14"/>
        <end position="34"/>
    </location>
</feature>
<feature type="transmembrane region" description="Helical" evidence="1">
    <location>
        <begin position="49"/>
        <end position="69"/>
    </location>
</feature>
<feature type="transmembrane region" description="Helical" evidence="1">
    <location>
        <begin position="79"/>
        <end position="99"/>
    </location>
</feature>
<feature type="transmembrane region" description="Helical" evidence="1">
    <location>
        <begin position="125"/>
        <end position="145"/>
    </location>
</feature>
<feature type="transmembrane region" description="Helical" evidence="1">
    <location>
        <begin position="150"/>
        <end position="170"/>
    </location>
</feature>
<feature type="transmembrane region" description="Helical" evidence="1">
    <location>
        <begin position="185"/>
        <end position="205"/>
    </location>
</feature>
<feature type="transmembrane region" description="Helical" evidence="1">
    <location>
        <begin position="207"/>
        <end position="227"/>
    </location>
</feature>
<feature type="domain" description="CBS 1" evidence="2">
    <location>
        <begin position="309"/>
        <end position="368"/>
    </location>
</feature>
<feature type="domain" description="CBS 2" evidence="2">
    <location>
        <begin position="372"/>
        <end position="432"/>
    </location>
</feature>
<keyword id="KW-0129">CBS domain</keyword>
<keyword id="KW-1003">Cell membrane</keyword>
<keyword id="KW-0472">Membrane</keyword>
<keyword id="KW-0677">Repeat</keyword>
<keyword id="KW-0812">Transmembrane</keyword>
<keyword id="KW-1133">Transmembrane helix</keyword>
<dbReference type="EMBL" id="AE013218">
    <property type="protein sequence ID" value="AAM67868.1"/>
    <property type="molecule type" value="Genomic_DNA"/>
</dbReference>
<dbReference type="RefSeq" id="WP_011053835.1">
    <property type="nucleotide sequence ID" value="NC_004061.1"/>
</dbReference>
<dbReference type="SMR" id="Q8K9M0"/>
<dbReference type="STRING" id="198804.BUsg_314"/>
<dbReference type="GeneID" id="93003783"/>
<dbReference type="KEGG" id="bas:BUsg_314"/>
<dbReference type="eggNOG" id="COG1253">
    <property type="taxonomic scope" value="Bacteria"/>
</dbReference>
<dbReference type="HOGENOM" id="CLU_015237_0_0_6"/>
<dbReference type="Proteomes" id="UP000000416">
    <property type="component" value="Chromosome"/>
</dbReference>
<dbReference type="GO" id="GO:0005886">
    <property type="term" value="C:plasma membrane"/>
    <property type="evidence" value="ECO:0007669"/>
    <property type="project" value="UniProtKB-SubCell"/>
</dbReference>
<dbReference type="GO" id="GO:0050660">
    <property type="term" value="F:flavin adenine dinucleotide binding"/>
    <property type="evidence" value="ECO:0007669"/>
    <property type="project" value="InterPro"/>
</dbReference>
<dbReference type="CDD" id="cd04590">
    <property type="entry name" value="CBS_pair_CorC_HlyC_assoc"/>
    <property type="match status" value="1"/>
</dbReference>
<dbReference type="FunFam" id="3.10.580.10:FF:000008">
    <property type="entry name" value="Integral membrane protein TerC"/>
    <property type="match status" value="1"/>
</dbReference>
<dbReference type="Gene3D" id="3.30.465.10">
    <property type="match status" value="1"/>
</dbReference>
<dbReference type="Gene3D" id="3.10.580.10">
    <property type="entry name" value="CBS-domain"/>
    <property type="match status" value="1"/>
</dbReference>
<dbReference type="InterPro" id="IPR000644">
    <property type="entry name" value="CBS_dom"/>
</dbReference>
<dbReference type="InterPro" id="IPR046342">
    <property type="entry name" value="CBS_dom_sf"/>
</dbReference>
<dbReference type="InterPro" id="IPR036318">
    <property type="entry name" value="FAD-bd_PCMH-like_sf"/>
</dbReference>
<dbReference type="InterPro" id="IPR016169">
    <property type="entry name" value="FAD-bd_PCMH_sub2"/>
</dbReference>
<dbReference type="InterPro" id="IPR005496">
    <property type="entry name" value="Integral_membrane_TerC"/>
</dbReference>
<dbReference type="InterPro" id="IPR044751">
    <property type="entry name" value="Ion_transp-like_CBS"/>
</dbReference>
<dbReference type="InterPro" id="IPR005170">
    <property type="entry name" value="Transptr-assoc_dom"/>
</dbReference>
<dbReference type="PANTHER" id="PTHR22777">
    <property type="entry name" value="HEMOLYSIN-RELATED"/>
    <property type="match status" value="1"/>
</dbReference>
<dbReference type="PANTHER" id="PTHR22777:SF15">
    <property type="entry name" value="UPF0053 INNER MEMBRANE PROTEIN YOAE"/>
    <property type="match status" value="1"/>
</dbReference>
<dbReference type="Pfam" id="PF03471">
    <property type="entry name" value="CorC_HlyC"/>
    <property type="match status" value="1"/>
</dbReference>
<dbReference type="Pfam" id="PF03741">
    <property type="entry name" value="TerC"/>
    <property type="match status" value="1"/>
</dbReference>
<dbReference type="SMART" id="SM01091">
    <property type="entry name" value="CorC_HlyC"/>
    <property type="match status" value="1"/>
</dbReference>
<dbReference type="SUPFAM" id="SSF54631">
    <property type="entry name" value="CBS-domain pair"/>
    <property type="match status" value="1"/>
</dbReference>
<dbReference type="SUPFAM" id="SSF56176">
    <property type="entry name" value="FAD-binding/transporter-associated domain-like"/>
    <property type="match status" value="1"/>
</dbReference>
<dbReference type="PROSITE" id="PS51371">
    <property type="entry name" value="CBS"/>
    <property type="match status" value="2"/>
</dbReference>
<comment type="subcellular location">
    <subcellularLocation>
        <location evidence="3">Cell membrane</location>
        <topology evidence="3">Multi-pass membrane protein</topology>
    </subcellularLocation>
</comment>
<comment type="similarity">
    <text evidence="3">Belongs to the UPF0053 family.</text>
</comment>